<feature type="chain" id="PRO_1000055411" description="Large ribosomal subunit protein uL13">
    <location>
        <begin position="1"/>
        <end position="144"/>
    </location>
</feature>
<evidence type="ECO:0000255" key="1">
    <source>
        <dbReference type="HAMAP-Rule" id="MF_01366"/>
    </source>
</evidence>
<evidence type="ECO:0000305" key="2"/>
<comment type="function">
    <text evidence="1">This protein is one of the early assembly proteins of the 50S ribosomal subunit, although it is not seen to bind rRNA by itself. It is important during the early stages of 50S assembly.</text>
</comment>
<comment type="subunit">
    <text evidence="1">Part of the 50S ribosomal subunit.</text>
</comment>
<comment type="similarity">
    <text evidence="1">Belongs to the universal ribosomal protein uL13 family.</text>
</comment>
<dbReference type="EMBL" id="AE017244">
    <property type="protein sequence ID" value="AAZ54013.1"/>
    <property type="molecule type" value="Genomic_DNA"/>
</dbReference>
<dbReference type="RefSeq" id="WP_011284373.1">
    <property type="nucleotide sequence ID" value="NC_007332.1"/>
</dbReference>
<dbReference type="SMR" id="Q4A776"/>
<dbReference type="GeneID" id="41334954"/>
<dbReference type="KEGG" id="mhp:MHP7448_0651"/>
<dbReference type="HOGENOM" id="CLU_082184_2_2_14"/>
<dbReference type="Proteomes" id="UP000000553">
    <property type="component" value="Chromosome"/>
</dbReference>
<dbReference type="GO" id="GO:0022625">
    <property type="term" value="C:cytosolic large ribosomal subunit"/>
    <property type="evidence" value="ECO:0007669"/>
    <property type="project" value="TreeGrafter"/>
</dbReference>
<dbReference type="GO" id="GO:0003729">
    <property type="term" value="F:mRNA binding"/>
    <property type="evidence" value="ECO:0007669"/>
    <property type="project" value="TreeGrafter"/>
</dbReference>
<dbReference type="GO" id="GO:0003735">
    <property type="term" value="F:structural constituent of ribosome"/>
    <property type="evidence" value="ECO:0007669"/>
    <property type="project" value="InterPro"/>
</dbReference>
<dbReference type="GO" id="GO:0017148">
    <property type="term" value="P:negative regulation of translation"/>
    <property type="evidence" value="ECO:0007669"/>
    <property type="project" value="TreeGrafter"/>
</dbReference>
<dbReference type="GO" id="GO:0006412">
    <property type="term" value="P:translation"/>
    <property type="evidence" value="ECO:0007669"/>
    <property type="project" value="UniProtKB-UniRule"/>
</dbReference>
<dbReference type="CDD" id="cd00392">
    <property type="entry name" value="Ribosomal_L13"/>
    <property type="match status" value="1"/>
</dbReference>
<dbReference type="Gene3D" id="3.90.1180.10">
    <property type="entry name" value="Ribosomal protein L13"/>
    <property type="match status" value="1"/>
</dbReference>
<dbReference type="HAMAP" id="MF_01366">
    <property type="entry name" value="Ribosomal_uL13"/>
    <property type="match status" value="1"/>
</dbReference>
<dbReference type="InterPro" id="IPR005822">
    <property type="entry name" value="Ribosomal_uL13"/>
</dbReference>
<dbReference type="InterPro" id="IPR005823">
    <property type="entry name" value="Ribosomal_uL13_bac-type"/>
</dbReference>
<dbReference type="InterPro" id="IPR036899">
    <property type="entry name" value="Ribosomal_uL13_sf"/>
</dbReference>
<dbReference type="NCBIfam" id="TIGR01066">
    <property type="entry name" value="rplM_bact"/>
    <property type="match status" value="1"/>
</dbReference>
<dbReference type="PANTHER" id="PTHR11545:SF2">
    <property type="entry name" value="LARGE RIBOSOMAL SUBUNIT PROTEIN UL13M"/>
    <property type="match status" value="1"/>
</dbReference>
<dbReference type="PANTHER" id="PTHR11545">
    <property type="entry name" value="RIBOSOMAL PROTEIN L13"/>
    <property type="match status" value="1"/>
</dbReference>
<dbReference type="Pfam" id="PF00572">
    <property type="entry name" value="Ribosomal_L13"/>
    <property type="match status" value="1"/>
</dbReference>
<dbReference type="PIRSF" id="PIRSF002181">
    <property type="entry name" value="Ribosomal_L13"/>
    <property type="match status" value="1"/>
</dbReference>
<dbReference type="SUPFAM" id="SSF52161">
    <property type="entry name" value="Ribosomal protein L13"/>
    <property type="match status" value="1"/>
</dbReference>
<protein>
    <recommendedName>
        <fullName evidence="1">Large ribosomal subunit protein uL13</fullName>
    </recommendedName>
    <alternativeName>
        <fullName evidence="2">50S ribosomal protein L13</fullName>
    </alternativeName>
</protein>
<sequence>MRQTTFVKHQEVKQKWFVIDAESKILGRLAAFVASRLRGKHYPHFTPNVDMGDKIIIINAEKILLTAKKEEQKLYYNHSGYPGGLRVRTAREMRAKKPIALLERAIYGMIPHTKLGDKQRKNLYVYSGSEHPHLGQNPEKLEVK</sequence>
<reference key="1">
    <citation type="journal article" date="2005" name="J. Bacteriol.">
        <title>Swine and poultry pathogens: the complete genome sequences of two strains of Mycoplasma hyopneumoniae and a strain of Mycoplasma synoviae.</title>
        <authorList>
            <person name="Vasconcelos A.T.R."/>
            <person name="Ferreira H.B."/>
            <person name="Bizarro C.V."/>
            <person name="Bonatto S.L."/>
            <person name="Carvalho M.O."/>
            <person name="Pinto P.M."/>
            <person name="Almeida D.F."/>
            <person name="Almeida L.G.P."/>
            <person name="Almeida R."/>
            <person name="Alves-Junior L."/>
            <person name="Assuncao E.N."/>
            <person name="Azevedo V.A.C."/>
            <person name="Bogo M.R."/>
            <person name="Brigido M.M."/>
            <person name="Brocchi M."/>
            <person name="Burity H.A."/>
            <person name="Camargo A.A."/>
            <person name="Camargo S.S."/>
            <person name="Carepo M.S."/>
            <person name="Carraro D.M."/>
            <person name="de Mattos Cascardo J.C."/>
            <person name="Castro L.A."/>
            <person name="Cavalcanti G."/>
            <person name="Chemale G."/>
            <person name="Collevatti R.G."/>
            <person name="Cunha C.W."/>
            <person name="Dallagiovanna B."/>
            <person name="Dambros B.P."/>
            <person name="Dellagostin O.A."/>
            <person name="Falcao C."/>
            <person name="Fantinatti-Garboggini F."/>
            <person name="Felipe M.S.S."/>
            <person name="Fiorentin L."/>
            <person name="Franco G.R."/>
            <person name="Freitas N.S.A."/>
            <person name="Frias D."/>
            <person name="Grangeiro T.B."/>
            <person name="Grisard E.C."/>
            <person name="Guimaraes C.T."/>
            <person name="Hungria M."/>
            <person name="Jardim S.N."/>
            <person name="Krieger M.A."/>
            <person name="Laurino J.P."/>
            <person name="Lima L.F.A."/>
            <person name="Lopes M.I."/>
            <person name="Loreto E.L.S."/>
            <person name="Madeira H.M.F."/>
            <person name="Manfio G.P."/>
            <person name="Maranhao A.Q."/>
            <person name="Martinkovics C.T."/>
            <person name="Medeiros S.R.B."/>
            <person name="Moreira M.A.M."/>
            <person name="Neiva M."/>
            <person name="Ramalho-Neto C.E."/>
            <person name="Nicolas M.F."/>
            <person name="Oliveira S.C."/>
            <person name="Paixao R.F.C."/>
            <person name="Pedrosa F.O."/>
            <person name="Pena S.D.J."/>
            <person name="Pereira M."/>
            <person name="Pereira-Ferrari L."/>
            <person name="Piffer I."/>
            <person name="Pinto L.S."/>
            <person name="Potrich D.P."/>
            <person name="Salim A.C.M."/>
            <person name="Santos F.R."/>
            <person name="Schmitt R."/>
            <person name="Schneider M.P.C."/>
            <person name="Schrank A."/>
            <person name="Schrank I.S."/>
            <person name="Schuck A.F."/>
            <person name="Seuanez H.N."/>
            <person name="Silva D.W."/>
            <person name="Silva R."/>
            <person name="Silva S.C."/>
            <person name="Soares C.M.A."/>
            <person name="Souza K.R.L."/>
            <person name="Souza R.C."/>
            <person name="Staats C.C."/>
            <person name="Steffens M.B.R."/>
            <person name="Teixeira S.M.R."/>
            <person name="Urmenyi T.P."/>
            <person name="Vainstein M.H."/>
            <person name="Zuccherato L.W."/>
            <person name="Simpson A.J.G."/>
            <person name="Zaha A."/>
        </authorList>
    </citation>
    <scope>NUCLEOTIDE SEQUENCE [LARGE SCALE GENOMIC DNA]</scope>
    <source>
        <strain>7448</strain>
    </source>
</reference>
<organism>
    <name type="scientific">Mesomycoplasma hyopneumoniae (strain 7448)</name>
    <name type="common">Mycoplasma hyopneumoniae</name>
    <dbReference type="NCBI Taxonomy" id="262722"/>
    <lineage>
        <taxon>Bacteria</taxon>
        <taxon>Bacillati</taxon>
        <taxon>Mycoplasmatota</taxon>
        <taxon>Mycoplasmoidales</taxon>
        <taxon>Metamycoplasmataceae</taxon>
        <taxon>Mesomycoplasma</taxon>
    </lineage>
</organism>
<gene>
    <name evidence="1" type="primary">rplM</name>
    <name type="ordered locus">MHP7448_0651</name>
</gene>
<accession>Q4A776</accession>
<name>RL13_MESH7</name>
<keyword id="KW-0687">Ribonucleoprotein</keyword>
<keyword id="KW-0689">Ribosomal protein</keyword>
<proteinExistence type="inferred from homology"/>